<accession>A6GZ85</accession>
<dbReference type="EMBL" id="AM398681">
    <property type="protein sequence ID" value="CAL43408.1"/>
    <property type="molecule type" value="Genomic_DNA"/>
</dbReference>
<dbReference type="RefSeq" id="WP_011963456.1">
    <property type="nucleotide sequence ID" value="NC_009613.3"/>
</dbReference>
<dbReference type="RefSeq" id="YP_001296219.1">
    <property type="nucleotide sequence ID" value="NC_009613.3"/>
</dbReference>
<dbReference type="SMR" id="A6GZ85"/>
<dbReference type="STRING" id="402612.FP1325"/>
<dbReference type="EnsemblBacteria" id="CAL43408">
    <property type="protein sequence ID" value="CAL43408"/>
    <property type="gene ID" value="FP1325"/>
</dbReference>
<dbReference type="GeneID" id="66553228"/>
<dbReference type="KEGG" id="fps:FP1325"/>
<dbReference type="PATRIC" id="fig|402612.5.peg.1342"/>
<dbReference type="eggNOG" id="COG0096">
    <property type="taxonomic scope" value="Bacteria"/>
</dbReference>
<dbReference type="HOGENOM" id="CLU_098428_0_2_10"/>
<dbReference type="OrthoDB" id="9802617at2"/>
<dbReference type="Proteomes" id="UP000006394">
    <property type="component" value="Chromosome"/>
</dbReference>
<dbReference type="GO" id="GO:1990904">
    <property type="term" value="C:ribonucleoprotein complex"/>
    <property type="evidence" value="ECO:0007669"/>
    <property type="project" value="UniProtKB-KW"/>
</dbReference>
<dbReference type="GO" id="GO:0005840">
    <property type="term" value="C:ribosome"/>
    <property type="evidence" value="ECO:0007669"/>
    <property type="project" value="UniProtKB-KW"/>
</dbReference>
<dbReference type="GO" id="GO:0019843">
    <property type="term" value="F:rRNA binding"/>
    <property type="evidence" value="ECO:0007669"/>
    <property type="project" value="UniProtKB-UniRule"/>
</dbReference>
<dbReference type="GO" id="GO:0003735">
    <property type="term" value="F:structural constituent of ribosome"/>
    <property type="evidence" value="ECO:0007669"/>
    <property type="project" value="InterPro"/>
</dbReference>
<dbReference type="GO" id="GO:0006412">
    <property type="term" value="P:translation"/>
    <property type="evidence" value="ECO:0007669"/>
    <property type="project" value="UniProtKB-UniRule"/>
</dbReference>
<dbReference type="FunFam" id="3.30.1370.30:FF:000002">
    <property type="entry name" value="30S ribosomal protein S8"/>
    <property type="match status" value="1"/>
</dbReference>
<dbReference type="FunFam" id="3.30.1490.10:FF:000001">
    <property type="entry name" value="30S ribosomal protein S8"/>
    <property type="match status" value="1"/>
</dbReference>
<dbReference type="Gene3D" id="3.30.1370.30">
    <property type="match status" value="1"/>
</dbReference>
<dbReference type="Gene3D" id="3.30.1490.10">
    <property type="match status" value="1"/>
</dbReference>
<dbReference type="HAMAP" id="MF_01302_B">
    <property type="entry name" value="Ribosomal_uS8_B"/>
    <property type="match status" value="1"/>
</dbReference>
<dbReference type="InterPro" id="IPR000630">
    <property type="entry name" value="Ribosomal_uS8"/>
</dbReference>
<dbReference type="InterPro" id="IPR047863">
    <property type="entry name" value="Ribosomal_uS8_CS"/>
</dbReference>
<dbReference type="InterPro" id="IPR035987">
    <property type="entry name" value="Ribosomal_uS8_sf"/>
</dbReference>
<dbReference type="NCBIfam" id="NF001109">
    <property type="entry name" value="PRK00136.1"/>
    <property type="match status" value="1"/>
</dbReference>
<dbReference type="PANTHER" id="PTHR11758">
    <property type="entry name" value="40S RIBOSOMAL PROTEIN S15A"/>
    <property type="match status" value="1"/>
</dbReference>
<dbReference type="Pfam" id="PF00410">
    <property type="entry name" value="Ribosomal_S8"/>
    <property type="match status" value="1"/>
</dbReference>
<dbReference type="SUPFAM" id="SSF56047">
    <property type="entry name" value="Ribosomal protein S8"/>
    <property type="match status" value="1"/>
</dbReference>
<dbReference type="PROSITE" id="PS00053">
    <property type="entry name" value="RIBOSOMAL_S8"/>
    <property type="match status" value="1"/>
</dbReference>
<organism>
    <name type="scientific">Flavobacterium psychrophilum (strain ATCC 49511 / DSM 21280 / CIP 103535 / JIP02/86)</name>
    <dbReference type="NCBI Taxonomy" id="402612"/>
    <lineage>
        <taxon>Bacteria</taxon>
        <taxon>Pseudomonadati</taxon>
        <taxon>Bacteroidota</taxon>
        <taxon>Flavobacteriia</taxon>
        <taxon>Flavobacteriales</taxon>
        <taxon>Flavobacteriaceae</taxon>
        <taxon>Flavobacterium</taxon>
    </lineage>
</organism>
<proteinExistence type="inferred from homology"/>
<gene>
    <name evidence="1" type="primary">rpsH</name>
    <name type="ordered locus">FP1325</name>
</gene>
<comment type="function">
    <text evidence="1">One of the primary rRNA binding proteins, it binds directly to 16S rRNA central domain where it helps coordinate assembly of the platform of the 30S subunit.</text>
</comment>
<comment type="subunit">
    <text evidence="1">Part of the 30S ribosomal subunit. Contacts proteins S5 and S12.</text>
</comment>
<comment type="similarity">
    <text evidence="1">Belongs to the universal ribosomal protein uS8 family.</text>
</comment>
<sequence length="132" mass="14642">MYTDPIADYLTRVRNAAKANHKVVEIPASNMKKEITKILFDQGYILSYKFEDNAVQGSIKIALKYDKVTKESVIRDIQRISKPGLRKYSGSSTIPRILNGLGIAIVSTSKGLMTGKLAKQLNVGGEVICYVY</sequence>
<protein>
    <recommendedName>
        <fullName evidence="1">Small ribosomal subunit protein uS8</fullName>
    </recommendedName>
    <alternativeName>
        <fullName evidence="2">30S ribosomal protein S8</fullName>
    </alternativeName>
</protein>
<name>RS8_FLAPJ</name>
<keyword id="KW-1185">Reference proteome</keyword>
<keyword id="KW-0687">Ribonucleoprotein</keyword>
<keyword id="KW-0689">Ribosomal protein</keyword>
<keyword id="KW-0694">RNA-binding</keyword>
<keyword id="KW-0699">rRNA-binding</keyword>
<reference key="1">
    <citation type="journal article" date="2007" name="Nat. Biotechnol.">
        <title>Complete genome sequence of the fish pathogen Flavobacterium psychrophilum.</title>
        <authorList>
            <person name="Duchaud E."/>
            <person name="Boussaha M."/>
            <person name="Loux V."/>
            <person name="Bernardet J.-F."/>
            <person name="Michel C."/>
            <person name="Kerouault B."/>
            <person name="Mondot S."/>
            <person name="Nicolas P."/>
            <person name="Bossy R."/>
            <person name="Caron C."/>
            <person name="Bessieres P."/>
            <person name="Gibrat J.-F."/>
            <person name="Claverol S."/>
            <person name="Dumetz F."/>
            <person name="Le Henaff M."/>
            <person name="Benmansour A."/>
        </authorList>
    </citation>
    <scope>NUCLEOTIDE SEQUENCE [LARGE SCALE GENOMIC DNA]</scope>
    <source>
        <strain>ATCC 49511 / DSM 21280 / CIP 103535 / JIP02/86</strain>
    </source>
</reference>
<evidence type="ECO:0000255" key="1">
    <source>
        <dbReference type="HAMAP-Rule" id="MF_01302"/>
    </source>
</evidence>
<evidence type="ECO:0000305" key="2"/>
<feature type="chain" id="PRO_0000305743" description="Small ribosomal subunit protein uS8">
    <location>
        <begin position="1"/>
        <end position="132"/>
    </location>
</feature>